<proteinExistence type="inferred from homology"/>
<feature type="chain" id="PRO_1000058357" description="Serine--tRNA ligase">
    <location>
        <begin position="1"/>
        <end position="430"/>
    </location>
</feature>
<feature type="binding site" evidence="1">
    <location>
        <begin position="237"/>
        <end position="239"/>
    </location>
    <ligand>
        <name>L-serine</name>
        <dbReference type="ChEBI" id="CHEBI:33384"/>
    </ligand>
</feature>
<feature type="binding site" evidence="1">
    <location>
        <begin position="268"/>
        <end position="270"/>
    </location>
    <ligand>
        <name>ATP</name>
        <dbReference type="ChEBI" id="CHEBI:30616"/>
    </ligand>
</feature>
<feature type="binding site" evidence="1">
    <location>
        <position position="291"/>
    </location>
    <ligand>
        <name>L-serine</name>
        <dbReference type="ChEBI" id="CHEBI:33384"/>
    </ligand>
</feature>
<feature type="binding site" evidence="1">
    <location>
        <begin position="355"/>
        <end position="358"/>
    </location>
    <ligand>
        <name>ATP</name>
        <dbReference type="ChEBI" id="CHEBI:30616"/>
    </ligand>
</feature>
<feature type="binding site" evidence="1">
    <location>
        <position position="391"/>
    </location>
    <ligand>
        <name>L-serine</name>
        <dbReference type="ChEBI" id="CHEBI:33384"/>
    </ligand>
</feature>
<dbReference type="EC" id="6.1.1.11" evidence="1"/>
<dbReference type="EMBL" id="CP000826">
    <property type="protein sequence ID" value="ABV40790.1"/>
    <property type="molecule type" value="Genomic_DNA"/>
</dbReference>
<dbReference type="SMR" id="A8GCF0"/>
<dbReference type="STRING" id="399741.Spro_1686"/>
<dbReference type="KEGG" id="spe:Spro_1686"/>
<dbReference type="eggNOG" id="COG0172">
    <property type="taxonomic scope" value="Bacteria"/>
</dbReference>
<dbReference type="HOGENOM" id="CLU_023797_1_1_6"/>
<dbReference type="OrthoDB" id="9804647at2"/>
<dbReference type="UniPathway" id="UPA00906">
    <property type="reaction ID" value="UER00895"/>
</dbReference>
<dbReference type="GO" id="GO:0005737">
    <property type="term" value="C:cytoplasm"/>
    <property type="evidence" value="ECO:0007669"/>
    <property type="project" value="UniProtKB-SubCell"/>
</dbReference>
<dbReference type="GO" id="GO:0005524">
    <property type="term" value="F:ATP binding"/>
    <property type="evidence" value="ECO:0007669"/>
    <property type="project" value="UniProtKB-UniRule"/>
</dbReference>
<dbReference type="GO" id="GO:0004828">
    <property type="term" value="F:serine-tRNA ligase activity"/>
    <property type="evidence" value="ECO:0007669"/>
    <property type="project" value="UniProtKB-UniRule"/>
</dbReference>
<dbReference type="GO" id="GO:0016260">
    <property type="term" value="P:selenocysteine biosynthetic process"/>
    <property type="evidence" value="ECO:0007669"/>
    <property type="project" value="UniProtKB-UniRule"/>
</dbReference>
<dbReference type="GO" id="GO:0006434">
    <property type="term" value="P:seryl-tRNA aminoacylation"/>
    <property type="evidence" value="ECO:0007669"/>
    <property type="project" value="UniProtKB-UniRule"/>
</dbReference>
<dbReference type="CDD" id="cd00770">
    <property type="entry name" value="SerRS_core"/>
    <property type="match status" value="1"/>
</dbReference>
<dbReference type="FunFam" id="1.10.287.40:FF:000001">
    <property type="entry name" value="Serine--tRNA ligase"/>
    <property type="match status" value="1"/>
</dbReference>
<dbReference type="FunFam" id="3.30.930.10:FF:000018">
    <property type="entry name" value="Serine--tRNA ligase"/>
    <property type="match status" value="1"/>
</dbReference>
<dbReference type="Gene3D" id="3.30.930.10">
    <property type="entry name" value="Bira Bifunctional Protein, Domain 2"/>
    <property type="match status" value="1"/>
</dbReference>
<dbReference type="Gene3D" id="1.10.287.40">
    <property type="entry name" value="Serine-tRNA synthetase, tRNA binding domain"/>
    <property type="match status" value="1"/>
</dbReference>
<dbReference type="HAMAP" id="MF_00176">
    <property type="entry name" value="Ser_tRNA_synth_type1"/>
    <property type="match status" value="1"/>
</dbReference>
<dbReference type="InterPro" id="IPR002314">
    <property type="entry name" value="aa-tRNA-synt_IIb"/>
</dbReference>
<dbReference type="InterPro" id="IPR006195">
    <property type="entry name" value="aa-tRNA-synth_II"/>
</dbReference>
<dbReference type="InterPro" id="IPR045864">
    <property type="entry name" value="aa-tRNA-synth_II/BPL/LPL"/>
</dbReference>
<dbReference type="InterPro" id="IPR002317">
    <property type="entry name" value="Ser-tRNA-ligase_type_1"/>
</dbReference>
<dbReference type="InterPro" id="IPR015866">
    <property type="entry name" value="Ser-tRNA-synth_1_N"/>
</dbReference>
<dbReference type="InterPro" id="IPR042103">
    <property type="entry name" value="SerRS_1_N_sf"/>
</dbReference>
<dbReference type="InterPro" id="IPR033729">
    <property type="entry name" value="SerRS_core"/>
</dbReference>
<dbReference type="InterPro" id="IPR010978">
    <property type="entry name" value="tRNA-bd_arm"/>
</dbReference>
<dbReference type="NCBIfam" id="TIGR00414">
    <property type="entry name" value="serS"/>
    <property type="match status" value="1"/>
</dbReference>
<dbReference type="PANTHER" id="PTHR43697:SF1">
    <property type="entry name" value="SERINE--TRNA LIGASE"/>
    <property type="match status" value="1"/>
</dbReference>
<dbReference type="PANTHER" id="PTHR43697">
    <property type="entry name" value="SERYL-TRNA SYNTHETASE"/>
    <property type="match status" value="1"/>
</dbReference>
<dbReference type="Pfam" id="PF02403">
    <property type="entry name" value="Seryl_tRNA_N"/>
    <property type="match status" value="1"/>
</dbReference>
<dbReference type="Pfam" id="PF00587">
    <property type="entry name" value="tRNA-synt_2b"/>
    <property type="match status" value="1"/>
</dbReference>
<dbReference type="PIRSF" id="PIRSF001529">
    <property type="entry name" value="Ser-tRNA-synth_IIa"/>
    <property type="match status" value="1"/>
</dbReference>
<dbReference type="PRINTS" id="PR00981">
    <property type="entry name" value="TRNASYNTHSER"/>
</dbReference>
<dbReference type="SUPFAM" id="SSF55681">
    <property type="entry name" value="Class II aaRS and biotin synthetases"/>
    <property type="match status" value="1"/>
</dbReference>
<dbReference type="SUPFAM" id="SSF46589">
    <property type="entry name" value="tRNA-binding arm"/>
    <property type="match status" value="1"/>
</dbReference>
<dbReference type="PROSITE" id="PS50862">
    <property type="entry name" value="AA_TRNA_LIGASE_II"/>
    <property type="match status" value="1"/>
</dbReference>
<accession>A8GCF0</accession>
<comment type="function">
    <text evidence="1">Catalyzes the attachment of serine to tRNA(Ser). Is also able to aminoacylate tRNA(Sec) with serine, to form the misacylated tRNA L-seryl-tRNA(Sec), which will be further converted into selenocysteinyl-tRNA(Sec).</text>
</comment>
<comment type="catalytic activity">
    <reaction evidence="1">
        <text>tRNA(Ser) + L-serine + ATP = L-seryl-tRNA(Ser) + AMP + diphosphate + H(+)</text>
        <dbReference type="Rhea" id="RHEA:12292"/>
        <dbReference type="Rhea" id="RHEA-COMP:9669"/>
        <dbReference type="Rhea" id="RHEA-COMP:9703"/>
        <dbReference type="ChEBI" id="CHEBI:15378"/>
        <dbReference type="ChEBI" id="CHEBI:30616"/>
        <dbReference type="ChEBI" id="CHEBI:33019"/>
        <dbReference type="ChEBI" id="CHEBI:33384"/>
        <dbReference type="ChEBI" id="CHEBI:78442"/>
        <dbReference type="ChEBI" id="CHEBI:78533"/>
        <dbReference type="ChEBI" id="CHEBI:456215"/>
        <dbReference type="EC" id="6.1.1.11"/>
    </reaction>
</comment>
<comment type="catalytic activity">
    <reaction evidence="1">
        <text>tRNA(Sec) + L-serine + ATP = L-seryl-tRNA(Sec) + AMP + diphosphate + H(+)</text>
        <dbReference type="Rhea" id="RHEA:42580"/>
        <dbReference type="Rhea" id="RHEA-COMP:9742"/>
        <dbReference type="Rhea" id="RHEA-COMP:10128"/>
        <dbReference type="ChEBI" id="CHEBI:15378"/>
        <dbReference type="ChEBI" id="CHEBI:30616"/>
        <dbReference type="ChEBI" id="CHEBI:33019"/>
        <dbReference type="ChEBI" id="CHEBI:33384"/>
        <dbReference type="ChEBI" id="CHEBI:78442"/>
        <dbReference type="ChEBI" id="CHEBI:78533"/>
        <dbReference type="ChEBI" id="CHEBI:456215"/>
        <dbReference type="EC" id="6.1.1.11"/>
    </reaction>
</comment>
<comment type="pathway">
    <text evidence="1">Aminoacyl-tRNA biosynthesis; selenocysteinyl-tRNA(Sec) biosynthesis; L-seryl-tRNA(Sec) from L-serine and tRNA(Sec): step 1/1.</text>
</comment>
<comment type="subunit">
    <text evidence="1">Homodimer. The tRNA molecule binds across the dimer.</text>
</comment>
<comment type="subcellular location">
    <subcellularLocation>
        <location evidence="1">Cytoplasm</location>
    </subcellularLocation>
</comment>
<comment type="domain">
    <text evidence="1">Consists of two distinct domains, a catalytic core and a N-terminal extension that is involved in tRNA binding.</text>
</comment>
<comment type="similarity">
    <text evidence="1">Belongs to the class-II aminoacyl-tRNA synthetase family. Type-1 seryl-tRNA synthetase subfamily.</text>
</comment>
<sequence>MLDPNLLRNELDAVAVKLARRGFKLDLDLLRSQEERRKVLQVETETLQAERNSRSKSIGAAKARGEDIEPLRREVNELGDKLDTAKAALDQLQAEIRDYALAIPNLPDDEVPDGKDDSDNLEVSRWGEPRQYDFAVRDHVDLGEMAGGLDFAAAVKLTGSRFVVMKGQIARMHRALSQFMLDLHTEQHGYQETYVPYLVNHATLFGTGQLPKFGEDLFHTKPLEEESDSSNYALIPTAEVPLTNLVRDEILEEESLPLKMTAHTPCFRAEAGSYGRDTRGLIRMHQFDKVEMVQIVRPEDSMTTLEELTGHAEKVLQLLNLPYRKMLLCTGDMGAGSCKTYDLEVWLPAQDTYREISSCSNMWDYQARRMQARCRSKTEKKPRLVHTLNGSGLAVGRTLVAVLENYQQADGRIQVPEVLRPYMGGLEYIG</sequence>
<gene>
    <name evidence="1" type="primary">serS</name>
    <name type="ordered locus">Spro_1686</name>
</gene>
<organism>
    <name type="scientific">Serratia proteamaculans (strain 568)</name>
    <dbReference type="NCBI Taxonomy" id="399741"/>
    <lineage>
        <taxon>Bacteria</taxon>
        <taxon>Pseudomonadati</taxon>
        <taxon>Pseudomonadota</taxon>
        <taxon>Gammaproteobacteria</taxon>
        <taxon>Enterobacterales</taxon>
        <taxon>Yersiniaceae</taxon>
        <taxon>Serratia</taxon>
    </lineage>
</organism>
<name>SYS_SERP5</name>
<reference key="1">
    <citation type="submission" date="2007-09" db="EMBL/GenBank/DDBJ databases">
        <title>Complete sequence of chromosome of Serratia proteamaculans 568.</title>
        <authorList>
            <consortium name="US DOE Joint Genome Institute"/>
            <person name="Copeland A."/>
            <person name="Lucas S."/>
            <person name="Lapidus A."/>
            <person name="Barry K."/>
            <person name="Glavina del Rio T."/>
            <person name="Dalin E."/>
            <person name="Tice H."/>
            <person name="Pitluck S."/>
            <person name="Chain P."/>
            <person name="Malfatti S."/>
            <person name="Shin M."/>
            <person name="Vergez L."/>
            <person name="Schmutz J."/>
            <person name="Larimer F."/>
            <person name="Land M."/>
            <person name="Hauser L."/>
            <person name="Kyrpides N."/>
            <person name="Kim E."/>
            <person name="Taghavi S."/>
            <person name="Newman L."/>
            <person name="Vangronsveld J."/>
            <person name="van der Lelie D."/>
            <person name="Richardson P."/>
        </authorList>
    </citation>
    <scope>NUCLEOTIDE SEQUENCE [LARGE SCALE GENOMIC DNA]</scope>
    <source>
        <strain>568</strain>
    </source>
</reference>
<keyword id="KW-0030">Aminoacyl-tRNA synthetase</keyword>
<keyword id="KW-0067">ATP-binding</keyword>
<keyword id="KW-0963">Cytoplasm</keyword>
<keyword id="KW-0436">Ligase</keyword>
<keyword id="KW-0547">Nucleotide-binding</keyword>
<keyword id="KW-0648">Protein biosynthesis</keyword>
<protein>
    <recommendedName>
        <fullName evidence="1">Serine--tRNA ligase</fullName>
        <ecNumber evidence="1">6.1.1.11</ecNumber>
    </recommendedName>
    <alternativeName>
        <fullName evidence="1">Seryl-tRNA synthetase</fullName>
        <shortName evidence="1">SerRS</shortName>
    </alternativeName>
    <alternativeName>
        <fullName evidence="1">Seryl-tRNA(Ser/Sec) synthetase</fullName>
    </alternativeName>
</protein>
<evidence type="ECO:0000255" key="1">
    <source>
        <dbReference type="HAMAP-Rule" id="MF_00176"/>
    </source>
</evidence>